<evidence type="ECO:0000255" key="1">
    <source>
        <dbReference type="HAMAP-Rule" id="MF_01953"/>
    </source>
</evidence>
<comment type="catalytic activity">
    <reaction evidence="1">
        <text>urea + 2 H2O + H(+) = hydrogencarbonate + 2 NH4(+)</text>
        <dbReference type="Rhea" id="RHEA:20557"/>
        <dbReference type="ChEBI" id="CHEBI:15377"/>
        <dbReference type="ChEBI" id="CHEBI:15378"/>
        <dbReference type="ChEBI" id="CHEBI:16199"/>
        <dbReference type="ChEBI" id="CHEBI:17544"/>
        <dbReference type="ChEBI" id="CHEBI:28938"/>
        <dbReference type="EC" id="3.5.1.5"/>
    </reaction>
</comment>
<comment type="cofactor">
    <cofactor evidence="1">
        <name>Ni cation</name>
        <dbReference type="ChEBI" id="CHEBI:25516"/>
    </cofactor>
    <text evidence="1">Binds 2 nickel ions per subunit.</text>
</comment>
<comment type="pathway">
    <text evidence="1">Nitrogen metabolism; urea degradation; CO(2) and NH(3) from urea (urease route): step 1/1.</text>
</comment>
<comment type="subunit">
    <text evidence="1">Heterotrimer of UreA (gamma), UreB (beta) and UreC (alpha) subunits. Three heterotrimers associate to form the active enzyme.</text>
</comment>
<comment type="subcellular location">
    <subcellularLocation>
        <location evidence="1">Cytoplasm</location>
    </subcellularLocation>
</comment>
<comment type="PTM">
    <text evidence="1">Carboxylation allows a single lysine to coordinate two nickel ions.</text>
</comment>
<comment type="similarity">
    <text evidence="1">Belongs to the metallo-dependent hydrolases superfamily. Urease alpha subunit family.</text>
</comment>
<feature type="chain" id="PRO_1000070688" description="Urease subunit alpha">
    <location>
        <begin position="1"/>
        <end position="570"/>
    </location>
</feature>
<feature type="domain" description="Urease" evidence="1">
    <location>
        <begin position="131"/>
        <end position="570"/>
    </location>
</feature>
<feature type="active site" description="Proton donor" evidence="1">
    <location>
        <position position="322"/>
    </location>
</feature>
<feature type="binding site" evidence="1">
    <location>
        <position position="136"/>
    </location>
    <ligand>
        <name>Ni(2+)</name>
        <dbReference type="ChEBI" id="CHEBI:49786"/>
        <label>1</label>
    </ligand>
</feature>
<feature type="binding site" evidence="1">
    <location>
        <position position="138"/>
    </location>
    <ligand>
        <name>Ni(2+)</name>
        <dbReference type="ChEBI" id="CHEBI:49786"/>
        <label>1</label>
    </ligand>
</feature>
<feature type="binding site" description="via carbamate group" evidence="1">
    <location>
        <position position="219"/>
    </location>
    <ligand>
        <name>Ni(2+)</name>
        <dbReference type="ChEBI" id="CHEBI:49786"/>
        <label>1</label>
    </ligand>
</feature>
<feature type="binding site" description="via carbamate group" evidence="1">
    <location>
        <position position="219"/>
    </location>
    <ligand>
        <name>Ni(2+)</name>
        <dbReference type="ChEBI" id="CHEBI:49786"/>
        <label>2</label>
    </ligand>
</feature>
<feature type="binding site" evidence="1">
    <location>
        <position position="221"/>
    </location>
    <ligand>
        <name>substrate</name>
    </ligand>
</feature>
<feature type="binding site" evidence="1">
    <location>
        <position position="248"/>
    </location>
    <ligand>
        <name>Ni(2+)</name>
        <dbReference type="ChEBI" id="CHEBI:49786"/>
        <label>2</label>
    </ligand>
</feature>
<feature type="binding site" evidence="1">
    <location>
        <position position="274"/>
    </location>
    <ligand>
        <name>Ni(2+)</name>
        <dbReference type="ChEBI" id="CHEBI:49786"/>
        <label>2</label>
    </ligand>
</feature>
<feature type="binding site" evidence="1">
    <location>
        <position position="362"/>
    </location>
    <ligand>
        <name>Ni(2+)</name>
        <dbReference type="ChEBI" id="CHEBI:49786"/>
        <label>1</label>
    </ligand>
</feature>
<feature type="modified residue" description="N6-carboxylysine" evidence="1">
    <location>
        <position position="219"/>
    </location>
</feature>
<proteinExistence type="inferred from homology"/>
<keyword id="KW-0963">Cytoplasm</keyword>
<keyword id="KW-0378">Hydrolase</keyword>
<keyword id="KW-0479">Metal-binding</keyword>
<keyword id="KW-0533">Nickel</keyword>
<sequence>MPYKISRAAYAGMFGPTTGDKVRLADTELFIEIEKDFTTYGEEVKFGGGKVIRDGMGQSQVTRADGAVDTVITNAVIVDHSGIYKADIGLKDGRIVAIGKAGNPDMQPGVNIIVGPGTEAIAAEGKIVTAGGMDSHIHFIAPQQIEEALMSGMTCMLGGGTGPAHGTLATTCTPGPWHLARMIEAADAFPMNLAFAGKGNASLPGALTEMVLAGATSLKLHEDWGTTPGAIDCCLSVADEYDVQVMIHTDTLNESGFVEDTIGAIKGRTIHAFHTEGAGGGHAPDIIKICGQPNVIPSSTNPTRPYTVNTIAEHLDMLMVCHHLSPSIPEDIAFAESRIRKETIAAEDILHDIGAFSIISSDSQAMGRVGEVAIRTWQTADKMKRQRGRLKEEKGDNDNFRVRRYIAKYTINPAIAHGLSREIGSVEVGKRADLVLWNPAFFGVKPDMVLLGGSIAAAPMGDPNASIPTPQPVHYRPMFASYGKSLTNSSVTFVSQASLDAGLKGRLGVAKELVAVKNTRGGISKASMIHNDLTPEIEVDPETYEVRANGELLACEPATVLPMAQRYFLF</sequence>
<gene>
    <name evidence="1" type="primary">ureC</name>
    <name type="ordered locus">RL3731</name>
</gene>
<organism>
    <name type="scientific">Rhizobium johnstonii (strain DSM 114642 / LMG 32736 / 3841)</name>
    <name type="common">Rhizobium leguminosarum bv. viciae</name>
    <dbReference type="NCBI Taxonomy" id="216596"/>
    <lineage>
        <taxon>Bacteria</taxon>
        <taxon>Pseudomonadati</taxon>
        <taxon>Pseudomonadota</taxon>
        <taxon>Alphaproteobacteria</taxon>
        <taxon>Hyphomicrobiales</taxon>
        <taxon>Rhizobiaceae</taxon>
        <taxon>Rhizobium/Agrobacterium group</taxon>
        <taxon>Rhizobium</taxon>
        <taxon>Rhizobium johnstonii</taxon>
    </lineage>
</organism>
<protein>
    <recommendedName>
        <fullName evidence="1">Urease subunit alpha</fullName>
        <ecNumber evidence="1">3.5.1.5</ecNumber>
    </recommendedName>
    <alternativeName>
        <fullName evidence="1">Urea amidohydrolase subunit alpha</fullName>
    </alternativeName>
</protein>
<dbReference type="EC" id="3.5.1.5" evidence="1"/>
<dbReference type="EMBL" id="AM236080">
    <property type="protein sequence ID" value="CAK09221.1"/>
    <property type="molecule type" value="Genomic_DNA"/>
</dbReference>
<dbReference type="RefSeq" id="WP_011653185.1">
    <property type="nucleotide sequence ID" value="NC_008380.1"/>
</dbReference>
<dbReference type="SMR" id="Q1MCV9"/>
<dbReference type="MEROPS" id="M38.982"/>
<dbReference type="EnsemblBacteria" id="CAK09221">
    <property type="protein sequence ID" value="CAK09221"/>
    <property type="gene ID" value="RL3731"/>
</dbReference>
<dbReference type="KEGG" id="rle:RL3731"/>
<dbReference type="eggNOG" id="COG0804">
    <property type="taxonomic scope" value="Bacteria"/>
</dbReference>
<dbReference type="HOGENOM" id="CLU_000980_0_0_5"/>
<dbReference type="UniPathway" id="UPA00258">
    <property type="reaction ID" value="UER00370"/>
</dbReference>
<dbReference type="Proteomes" id="UP000006575">
    <property type="component" value="Chromosome"/>
</dbReference>
<dbReference type="GO" id="GO:0005737">
    <property type="term" value="C:cytoplasm"/>
    <property type="evidence" value="ECO:0007669"/>
    <property type="project" value="UniProtKB-SubCell"/>
</dbReference>
<dbReference type="GO" id="GO:0016151">
    <property type="term" value="F:nickel cation binding"/>
    <property type="evidence" value="ECO:0007669"/>
    <property type="project" value="UniProtKB-UniRule"/>
</dbReference>
<dbReference type="GO" id="GO:0009039">
    <property type="term" value="F:urease activity"/>
    <property type="evidence" value="ECO:0007669"/>
    <property type="project" value="UniProtKB-UniRule"/>
</dbReference>
<dbReference type="GO" id="GO:0043419">
    <property type="term" value="P:urea catabolic process"/>
    <property type="evidence" value="ECO:0007669"/>
    <property type="project" value="UniProtKB-UniRule"/>
</dbReference>
<dbReference type="CDD" id="cd00375">
    <property type="entry name" value="Urease_alpha"/>
    <property type="match status" value="1"/>
</dbReference>
<dbReference type="Gene3D" id="3.20.20.140">
    <property type="entry name" value="Metal-dependent hydrolases"/>
    <property type="match status" value="1"/>
</dbReference>
<dbReference type="Gene3D" id="2.30.40.10">
    <property type="entry name" value="Urease, subunit C, domain 1"/>
    <property type="match status" value="1"/>
</dbReference>
<dbReference type="HAMAP" id="MF_01953">
    <property type="entry name" value="Urease_alpha"/>
    <property type="match status" value="1"/>
</dbReference>
<dbReference type="InterPro" id="IPR006680">
    <property type="entry name" value="Amidohydro-rel"/>
</dbReference>
<dbReference type="InterPro" id="IPR011059">
    <property type="entry name" value="Metal-dep_hydrolase_composite"/>
</dbReference>
<dbReference type="InterPro" id="IPR032466">
    <property type="entry name" value="Metal_Hydrolase"/>
</dbReference>
<dbReference type="InterPro" id="IPR011612">
    <property type="entry name" value="Urease_alpha_N_dom"/>
</dbReference>
<dbReference type="InterPro" id="IPR050112">
    <property type="entry name" value="Urease_alpha_subunit"/>
</dbReference>
<dbReference type="InterPro" id="IPR017950">
    <property type="entry name" value="Urease_AS"/>
</dbReference>
<dbReference type="InterPro" id="IPR005848">
    <property type="entry name" value="Urease_asu"/>
</dbReference>
<dbReference type="InterPro" id="IPR017951">
    <property type="entry name" value="Urease_asu_c"/>
</dbReference>
<dbReference type="InterPro" id="IPR029754">
    <property type="entry name" value="Urease_Ni-bd"/>
</dbReference>
<dbReference type="NCBIfam" id="NF009685">
    <property type="entry name" value="PRK13206.1"/>
    <property type="match status" value="1"/>
</dbReference>
<dbReference type="NCBIfam" id="NF009686">
    <property type="entry name" value="PRK13207.1"/>
    <property type="match status" value="1"/>
</dbReference>
<dbReference type="NCBIfam" id="TIGR01792">
    <property type="entry name" value="urease_alph"/>
    <property type="match status" value="1"/>
</dbReference>
<dbReference type="PANTHER" id="PTHR43440">
    <property type="entry name" value="UREASE"/>
    <property type="match status" value="1"/>
</dbReference>
<dbReference type="PANTHER" id="PTHR43440:SF1">
    <property type="entry name" value="UREASE"/>
    <property type="match status" value="1"/>
</dbReference>
<dbReference type="Pfam" id="PF01979">
    <property type="entry name" value="Amidohydro_1"/>
    <property type="match status" value="1"/>
</dbReference>
<dbReference type="Pfam" id="PF00449">
    <property type="entry name" value="Urease_alpha"/>
    <property type="match status" value="1"/>
</dbReference>
<dbReference type="PRINTS" id="PR01752">
    <property type="entry name" value="UREASE"/>
</dbReference>
<dbReference type="SUPFAM" id="SSF51338">
    <property type="entry name" value="Composite domain of metallo-dependent hydrolases"/>
    <property type="match status" value="2"/>
</dbReference>
<dbReference type="SUPFAM" id="SSF51556">
    <property type="entry name" value="Metallo-dependent hydrolases"/>
    <property type="match status" value="1"/>
</dbReference>
<dbReference type="PROSITE" id="PS01120">
    <property type="entry name" value="UREASE_1"/>
    <property type="match status" value="1"/>
</dbReference>
<dbReference type="PROSITE" id="PS00145">
    <property type="entry name" value="UREASE_2"/>
    <property type="match status" value="1"/>
</dbReference>
<dbReference type="PROSITE" id="PS51368">
    <property type="entry name" value="UREASE_3"/>
    <property type="match status" value="1"/>
</dbReference>
<accession>Q1MCV9</accession>
<reference key="1">
    <citation type="journal article" date="2006" name="Genome Biol.">
        <title>The genome of Rhizobium leguminosarum has recognizable core and accessory components.</title>
        <authorList>
            <person name="Young J.P.W."/>
            <person name="Crossman L.C."/>
            <person name="Johnston A.W.B."/>
            <person name="Thomson N.R."/>
            <person name="Ghazoui Z.F."/>
            <person name="Hull K.H."/>
            <person name="Wexler M."/>
            <person name="Curson A.R.J."/>
            <person name="Todd J.D."/>
            <person name="Poole P.S."/>
            <person name="Mauchline T.H."/>
            <person name="East A.K."/>
            <person name="Quail M.A."/>
            <person name="Churcher C."/>
            <person name="Arrowsmith C."/>
            <person name="Cherevach I."/>
            <person name="Chillingworth T."/>
            <person name="Clarke K."/>
            <person name="Cronin A."/>
            <person name="Davis P."/>
            <person name="Fraser A."/>
            <person name="Hance Z."/>
            <person name="Hauser H."/>
            <person name="Jagels K."/>
            <person name="Moule S."/>
            <person name="Mungall K."/>
            <person name="Norbertczak H."/>
            <person name="Rabbinowitsch E."/>
            <person name="Sanders M."/>
            <person name="Simmonds M."/>
            <person name="Whitehead S."/>
            <person name="Parkhill J."/>
        </authorList>
    </citation>
    <scope>NUCLEOTIDE SEQUENCE [LARGE SCALE GENOMIC DNA]</scope>
    <source>
        <strain>DSM 114642 / LMG 32736 / 3841</strain>
    </source>
</reference>
<name>URE1_RHIJ3</name>